<evidence type="ECO:0000255" key="1">
    <source>
        <dbReference type="HAMAP-Rule" id="MF_00159"/>
    </source>
</evidence>
<evidence type="ECO:0000305" key="2"/>
<protein>
    <recommendedName>
        <fullName evidence="1">4-hydroxy-3-methylbut-2-en-1-yl diphosphate synthase (flavodoxin)</fullName>
        <ecNumber evidence="1">1.17.7.3</ecNumber>
    </recommendedName>
    <alternativeName>
        <fullName evidence="1">1-hydroxy-2-methyl-2-(E)-butenyl 4-diphosphate synthase</fullName>
    </alternativeName>
</protein>
<comment type="function">
    <text evidence="1">Converts 2C-methyl-D-erythritol 2,4-cyclodiphosphate (ME-2,4cPP) into 1-hydroxy-2-methyl-2-(E)-butenyl 4-diphosphate.</text>
</comment>
<comment type="catalytic activity">
    <reaction evidence="1">
        <text>(2E)-4-hydroxy-3-methylbut-2-enyl diphosphate + oxidized [flavodoxin] + H2O + 2 H(+) = 2-C-methyl-D-erythritol 2,4-cyclic diphosphate + reduced [flavodoxin]</text>
        <dbReference type="Rhea" id="RHEA:43604"/>
        <dbReference type="Rhea" id="RHEA-COMP:10622"/>
        <dbReference type="Rhea" id="RHEA-COMP:10623"/>
        <dbReference type="ChEBI" id="CHEBI:15377"/>
        <dbReference type="ChEBI" id="CHEBI:15378"/>
        <dbReference type="ChEBI" id="CHEBI:57618"/>
        <dbReference type="ChEBI" id="CHEBI:58210"/>
        <dbReference type="ChEBI" id="CHEBI:58483"/>
        <dbReference type="ChEBI" id="CHEBI:128753"/>
        <dbReference type="EC" id="1.17.7.3"/>
    </reaction>
</comment>
<comment type="cofactor">
    <cofactor evidence="1">
        <name>[4Fe-4S] cluster</name>
        <dbReference type="ChEBI" id="CHEBI:49883"/>
    </cofactor>
    <text evidence="1">Binds 1 [4Fe-4S] cluster.</text>
</comment>
<comment type="pathway">
    <text evidence="1">Isoprenoid biosynthesis; isopentenyl diphosphate biosynthesis via DXP pathway; isopentenyl diphosphate from 1-deoxy-D-xylulose 5-phosphate: step 5/6.</text>
</comment>
<comment type="similarity">
    <text evidence="1">Belongs to the IspG family.</text>
</comment>
<comment type="sequence caution" evidence="2">
    <conflict type="erroneous initiation">
        <sequence resource="EMBL-CDS" id="ABO04953"/>
    </conflict>
    <text>Extended N-terminus.</text>
</comment>
<reference key="1">
    <citation type="journal article" date="2010" name="Genome Biol. Evol.">
        <title>Continuing evolution of Burkholderia mallei through genome reduction and large-scale rearrangements.</title>
        <authorList>
            <person name="Losada L."/>
            <person name="Ronning C.M."/>
            <person name="DeShazer D."/>
            <person name="Woods D."/>
            <person name="Fedorova N."/>
            <person name="Kim H.S."/>
            <person name="Shabalina S.A."/>
            <person name="Pearson T.R."/>
            <person name="Brinkac L."/>
            <person name="Tan P."/>
            <person name="Nandi T."/>
            <person name="Crabtree J."/>
            <person name="Badger J."/>
            <person name="Beckstrom-Sternberg S."/>
            <person name="Saqib M."/>
            <person name="Schutzer S.E."/>
            <person name="Keim P."/>
            <person name="Nierman W.C."/>
        </authorList>
    </citation>
    <scope>NUCLEOTIDE SEQUENCE [LARGE SCALE GENOMIC DNA]</scope>
    <source>
        <strain>NCTC 10247</strain>
    </source>
</reference>
<organism>
    <name type="scientific">Burkholderia mallei (strain NCTC 10247)</name>
    <dbReference type="NCBI Taxonomy" id="320389"/>
    <lineage>
        <taxon>Bacteria</taxon>
        <taxon>Pseudomonadati</taxon>
        <taxon>Pseudomonadota</taxon>
        <taxon>Betaproteobacteria</taxon>
        <taxon>Burkholderiales</taxon>
        <taxon>Burkholderiaceae</taxon>
        <taxon>Burkholderia</taxon>
        <taxon>pseudomallei group</taxon>
    </lineage>
</organism>
<sequence>MFGGHAPRRVSHAVDVRWGGTLVTIGGAAPVRVQSMTNTDTADAIGTAIQVKELANAGSELVRITVNTPEAAAAVPAIREQLDRMGVTVPLVGDFHYNGHLLLRDYPDCAQALSKYRINPGNVGQGAKRDSQFAQMIEAAIKYDKPVRIGVNWGSLDQDLLARMMDENGARAEPWEAQSVMYEALIQSAIGSAERAVELGLGRDKIVLSCKVSGVQDLVAVYRELSRRCGFALHLGLTEAGMGSKGIVASTAAIGLLLQEGIGDTIRISLTPEPGAPRTGEVVVGQEILQTMGLRSFAPMVVACPGCGRTTSTLFQELALRIQTYLREQMPVWRSEYPGVEKMNVAVMGCIVNGPGESKHANIGISLPGSGENPAAPVFVDGEKVKTLRGEHIAEEFQQIVSDYVARTYGRAAAQN</sequence>
<gene>
    <name evidence="1" type="primary">ispG</name>
    <name type="ordered locus">BMA10247_1107</name>
</gene>
<accession>A3MK75</accession>
<keyword id="KW-0004">4Fe-4S</keyword>
<keyword id="KW-0408">Iron</keyword>
<keyword id="KW-0411">Iron-sulfur</keyword>
<keyword id="KW-0414">Isoprene biosynthesis</keyword>
<keyword id="KW-0479">Metal-binding</keyword>
<keyword id="KW-0560">Oxidoreductase</keyword>
<feature type="chain" id="PRO_1000011446" description="4-hydroxy-3-methylbut-2-en-1-yl diphosphate synthase (flavodoxin)">
    <location>
        <begin position="1"/>
        <end position="416"/>
    </location>
</feature>
<feature type="binding site" evidence="1">
    <location>
        <position position="304"/>
    </location>
    <ligand>
        <name>[4Fe-4S] cluster</name>
        <dbReference type="ChEBI" id="CHEBI:49883"/>
    </ligand>
</feature>
<feature type="binding site" evidence="1">
    <location>
        <position position="307"/>
    </location>
    <ligand>
        <name>[4Fe-4S] cluster</name>
        <dbReference type="ChEBI" id="CHEBI:49883"/>
    </ligand>
</feature>
<feature type="binding site" evidence="1">
    <location>
        <position position="350"/>
    </location>
    <ligand>
        <name>[4Fe-4S] cluster</name>
        <dbReference type="ChEBI" id="CHEBI:49883"/>
    </ligand>
</feature>
<feature type="binding site" evidence="1">
    <location>
        <position position="357"/>
    </location>
    <ligand>
        <name>[4Fe-4S] cluster</name>
        <dbReference type="ChEBI" id="CHEBI:49883"/>
    </ligand>
</feature>
<name>ISPG_BURM7</name>
<dbReference type="EC" id="1.17.7.3" evidence="1"/>
<dbReference type="EMBL" id="CP000548">
    <property type="protein sequence ID" value="ABO04953.2"/>
    <property type="status" value="ALT_INIT"/>
    <property type="molecule type" value="Genomic_DNA"/>
</dbReference>
<dbReference type="SMR" id="A3MK75"/>
<dbReference type="KEGG" id="bmn:BMA10247_1107"/>
<dbReference type="UniPathway" id="UPA00056">
    <property type="reaction ID" value="UER00096"/>
</dbReference>
<dbReference type="GO" id="GO:0051539">
    <property type="term" value="F:4 iron, 4 sulfur cluster binding"/>
    <property type="evidence" value="ECO:0007669"/>
    <property type="project" value="UniProtKB-UniRule"/>
</dbReference>
<dbReference type="GO" id="GO:0046429">
    <property type="term" value="F:4-hydroxy-3-methylbut-2-en-1-yl diphosphate synthase activity (ferredoxin)"/>
    <property type="evidence" value="ECO:0007669"/>
    <property type="project" value="UniProtKB-UniRule"/>
</dbReference>
<dbReference type="GO" id="GO:0141197">
    <property type="term" value="F:4-hydroxy-3-methylbut-2-enyl-diphosphate synthase activity (flavodoxin)"/>
    <property type="evidence" value="ECO:0007669"/>
    <property type="project" value="UniProtKB-EC"/>
</dbReference>
<dbReference type="GO" id="GO:0005506">
    <property type="term" value="F:iron ion binding"/>
    <property type="evidence" value="ECO:0007669"/>
    <property type="project" value="InterPro"/>
</dbReference>
<dbReference type="GO" id="GO:0019288">
    <property type="term" value="P:isopentenyl diphosphate biosynthetic process, methylerythritol 4-phosphate pathway"/>
    <property type="evidence" value="ECO:0007669"/>
    <property type="project" value="UniProtKB-UniRule"/>
</dbReference>
<dbReference type="GO" id="GO:0016114">
    <property type="term" value="P:terpenoid biosynthetic process"/>
    <property type="evidence" value="ECO:0007669"/>
    <property type="project" value="InterPro"/>
</dbReference>
<dbReference type="FunFam" id="3.30.413.10:FF:000012">
    <property type="entry name" value="4-hydroxy-3-methylbut-2-en-1-yl diphosphate synthase (flavodoxin)"/>
    <property type="match status" value="1"/>
</dbReference>
<dbReference type="Gene3D" id="3.20.20.20">
    <property type="entry name" value="Dihydropteroate synthase-like"/>
    <property type="match status" value="1"/>
</dbReference>
<dbReference type="Gene3D" id="3.30.413.10">
    <property type="entry name" value="Sulfite Reductase Hemoprotein, domain 1"/>
    <property type="match status" value="1"/>
</dbReference>
<dbReference type="HAMAP" id="MF_00159">
    <property type="entry name" value="IspG"/>
    <property type="match status" value="1"/>
</dbReference>
<dbReference type="InterPro" id="IPR011005">
    <property type="entry name" value="Dihydropteroate_synth-like_sf"/>
</dbReference>
<dbReference type="InterPro" id="IPR016425">
    <property type="entry name" value="IspG_bac"/>
</dbReference>
<dbReference type="InterPro" id="IPR004588">
    <property type="entry name" value="IspG_bac-typ"/>
</dbReference>
<dbReference type="InterPro" id="IPR045854">
    <property type="entry name" value="NO2/SO3_Rdtase_4Fe4S_sf"/>
</dbReference>
<dbReference type="NCBIfam" id="TIGR00612">
    <property type="entry name" value="ispG_gcpE"/>
    <property type="match status" value="1"/>
</dbReference>
<dbReference type="NCBIfam" id="NF001540">
    <property type="entry name" value="PRK00366.1"/>
    <property type="match status" value="1"/>
</dbReference>
<dbReference type="PANTHER" id="PTHR30454">
    <property type="entry name" value="4-HYDROXY-3-METHYLBUT-2-EN-1-YL DIPHOSPHATE SYNTHASE"/>
    <property type="match status" value="1"/>
</dbReference>
<dbReference type="PANTHER" id="PTHR30454:SF0">
    <property type="entry name" value="4-HYDROXY-3-METHYLBUT-2-EN-1-YL DIPHOSPHATE SYNTHASE (FERREDOXIN), CHLOROPLASTIC"/>
    <property type="match status" value="1"/>
</dbReference>
<dbReference type="Pfam" id="PF04551">
    <property type="entry name" value="GcpE"/>
    <property type="match status" value="1"/>
</dbReference>
<dbReference type="PIRSF" id="PIRSF004640">
    <property type="entry name" value="IspG"/>
    <property type="match status" value="1"/>
</dbReference>
<dbReference type="SUPFAM" id="SSF56014">
    <property type="entry name" value="Nitrite and sulphite reductase 4Fe-4S domain-like"/>
    <property type="match status" value="1"/>
</dbReference>
<proteinExistence type="inferred from homology"/>